<dbReference type="EC" id="2.3.1.117" evidence="1"/>
<dbReference type="EMBL" id="AL157959">
    <property type="protein sequence ID" value="CAM09249.1"/>
    <property type="molecule type" value="Genomic_DNA"/>
</dbReference>
<dbReference type="PIR" id="F81787">
    <property type="entry name" value="F81787"/>
</dbReference>
<dbReference type="RefSeq" id="WP_002216408.1">
    <property type="nucleotide sequence ID" value="NC_003116.1"/>
</dbReference>
<dbReference type="SMR" id="Q9JSS7"/>
<dbReference type="EnsemblBacteria" id="CAM09249">
    <property type="protein sequence ID" value="CAM09249"/>
    <property type="gene ID" value="NMA2153"/>
</dbReference>
<dbReference type="KEGG" id="nma:NMA2153"/>
<dbReference type="HOGENOM" id="CLU_050859_0_1_4"/>
<dbReference type="UniPathway" id="UPA00034">
    <property type="reaction ID" value="UER00019"/>
</dbReference>
<dbReference type="Proteomes" id="UP000000626">
    <property type="component" value="Chromosome"/>
</dbReference>
<dbReference type="GO" id="GO:0005737">
    <property type="term" value="C:cytoplasm"/>
    <property type="evidence" value="ECO:0007669"/>
    <property type="project" value="UniProtKB-SubCell"/>
</dbReference>
<dbReference type="GO" id="GO:0008666">
    <property type="term" value="F:2,3,4,5-tetrahydropyridine-2,6-dicarboxylate N-succinyltransferase activity"/>
    <property type="evidence" value="ECO:0007669"/>
    <property type="project" value="UniProtKB-UniRule"/>
</dbReference>
<dbReference type="GO" id="GO:0016779">
    <property type="term" value="F:nucleotidyltransferase activity"/>
    <property type="evidence" value="ECO:0007669"/>
    <property type="project" value="TreeGrafter"/>
</dbReference>
<dbReference type="GO" id="GO:0019877">
    <property type="term" value="P:diaminopimelate biosynthetic process"/>
    <property type="evidence" value="ECO:0007669"/>
    <property type="project" value="UniProtKB-UniRule"/>
</dbReference>
<dbReference type="GO" id="GO:0009089">
    <property type="term" value="P:lysine biosynthetic process via diaminopimelate"/>
    <property type="evidence" value="ECO:0007669"/>
    <property type="project" value="UniProtKB-UniRule"/>
</dbReference>
<dbReference type="CDD" id="cd03350">
    <property type="entry name" value="LbH_THP_succinylT"/>
    <property type="match status" value="1"/>
</dbReference>
<dbReference type="Gene3D" id="2.160.10.10">
    <property type="entry name" value="Hexapeptide repeat proteins"/>
    <property type="match status" value="1"/>
</dbReference>
<dbReference type="Gene3D" id="1.10.166.10">
    <property type="entry name" value="Tetrahydrodipicolinate-N-succinyltransferase, N-terminal domain"/>
    <property type="match status" value="1"/>
</dbReference>
<dbReference type="HAMAP" id="MF_00811">
    <property type="entry name" value="DapD"/>
    <property type="match status" value="1"/>
</dbReference>
<dbReference type="InterPro" id="IPR005664">
    <property type="entry name" value="DapD_Trfase_Hexpep_rpt_fam"/>
</dbReference>
<dbReference type="InterPro" id="IPR001451">
    <property type="entry name" value="Hexapep"/>
</dbReference>
<dbReference type="InterPro" id="IPR018357">
    <property type="entry name" value="Hexapep_transf_CS"/>
</dbReference>
<dbReference type="InterPro" id="IPR023180">
    <property type="entry name" value="THP_succinylTrfase_dom1"/>
</dbReference>
<dbReference type="InterPro" id="IPR037133">
    <property type="entry name" value="THP_succinylTrfase_N_sf"/>
</dbReference>
<dbReference type="InterPro" id="IPR011004">
    <property type="entry name" value="Trimer_LpxA-like_sf"/>
</dbReference>
<dbReference type="NCBIfam" id="TIGR00965">
    <property type="entry name" value="dapD"/>
    <property type="match status" value="1"/>
</dbReference>
<dbReference type="NCBIfam" id="NF008808">
    <property type="entry name" value="PRK11830.1"/>
    <property type="match status" value="1"/>
</dbReference>
<dbReference type="PANTHER" id="PTHR19136:SF52">
    <property type="entry name" value="2,3,4,5-TETRAHYDROPYRIDINE-2,6-DICARBOXYLATE N-SUCCINYLTRANSFERASE"/>
    <property type="match status" value="1"/>
</dbReference>
<dbReference type="PANTHER" id="PTHR19136">
    <property type="entry name" value="MOLYBDENUM COFACTOR GUANYLYLTRANSFERASE"/>
    <property type="match status" value="1"/>
</dbReference>
<dbReference type="Pfam" id="PF14602">
    <property type="entry name" value="Hexapep_2"/>
    <property type="match status" value="1"/>
</dbReference>
<dbReference type="Pfam" id="PF14805">
    <property type="entry name" value="THDPS_N_2"/>
    <property type="match status" value="1"/>
</dbReference>
<dbReference type="SUPFAM" id="SSF51161">
    <property type="entry name" value="Trimeric LpxA-like enzymes"/>
    <property type="match status" value="1"/>
</dbReference>
<dbReference type="PROSITE" id="PS00101">
    <property type="entry name" value="HEXAPEP_TRANSFERASES"/>
    <property type="match status" value="1"/>
</dbReference>
<comment type="catalytic activity">
    <reaction evidence="1">
        <text>(S)-2,3,4,5-tetrahydrodipicolinate + succinyl-CoA + H2O = (S)-2-succinylamino-6-oxoheptanedioate + CoA</text>
        <dbReference type="Rhea" id="RHEA:17325"/>
        <dbReference type="ChEBI" id="CHEBI:15377"/>
        <dbReference type="ChEBI" id="CHEBI:15685"/>
        <dbReference type="ChEBI" id="CHEBI:16845"/>
        <dbReference type="ChEBI" id="CHEBI:57287"/>
        <dbReference type="ChEBI" id="CHEBI:57292"/>
        <dbReference type="EC" id="2.3.1.117"/>
    </reaction>
</comment>
<comment type="pathway">
    <text evidence="1">Amino-acid biosynthesis; L-lysine biosynthesis via DAP pathway; LL-2,6-diaminopimelate from (S)-tetrahydrodipicolinate (succinylase route): step 1/3.</text>
</comment>
<comment type="subunit">
    <text evidence="1">Homotrimer.</text>
</comment>
<comment type="subcellular location">
    <subcellularLocation>
        <location evidence="1">Cytoplasm</location>
    </subcellularLocation>
</comment>
<comment type="similarity">
    <text evidence="1">Belongs to the transferase hexapeptide repeat family.</text>
</comment>
<accession>Q9JSS7</accession>
<accession>A1ITY0</accession>
<proteinExistence type="inferred from homology"/>
<gene>
    <name evidence="1" type="primary">dapD</name>
    <name type="ordered locus">NMA2153</name>
</gene>
<feature type="chain" id="PRO_0000196951" description="2,3,4,5-tetrahydropyridine-2,6-dicarboxylate N-succinyltransferase">
    <location>
        <begin position="1"/>
        <end position="273"/>
    </location>
</feature>
<feature type="binding site" evidence="1">
    <location>
        <position position="104"/>
    </location>
    <ligand>
        <name>substrate</name>
    </ligand>
</feature>
<feature type="binding site" evidence="1">
    <location>
        <position position="141"/>
    </location>
    <ligand>
        <name>substrate</name>
    </ligand>
</feature>
<evidence type="ECO:0000255" key="1">
    <source>
        <dbReference type="HAMAP-Rule" id="MF_00811"/>
    </source>
</evidence>
<organism>
    <name type="scientific">Neisseria meningitidis serogroup A / serotype 4A (strain DSM 15465 / Z2491)</name>
    <dbReference type="NCBI Taxonomy" id="122587"/>
    <lineage>
        <taxon>Bacteria</taxon>
        <taxon>Pseudomonadati</taxon>
        <taxon>Pseudomonadota</taxon>
        <taxon>Betaproteobacteria</taxon>
        <taxon>Neisseriales</taxon>
        <taxon>Neisseriaceae</taxon>
        <taxon>Neisseria</taxon>
    </lineage>
</organism>
<reference key="1">
    <citation type="journal article" date="2000" name="Nature">
        <title>Complete DNA sequence of a serogroup A strain of Neisseria meningitidis Z2491.</title>
        <authorList>
            <person name="Parkhill J."/>
            <person name="Achtman M."/>
            <person name="James K.D."/>
            <person name="Bentley S.D."/>
            <person name="Churcher C.M."/>
            <person name="Klee S.R."/>
            <person name="Morelli G."/>
            <person name="Basham D."/>
            <person name="Brown D."/>
            <person name="Chillingworth T."/>
            <person name="Davies R.M."/>
            <person name="Davis P."/>
            <person name="Devlin K."/>
            <person name="Feltwell T."/>
            <person name="Hamlin N."/>
            <person name="Holroyd S."/>
            <person name="Jagels K."/>
            <person name="Leather S."/>
            <person name="Moule S."/>
            <person name="Mungall K.L."/>
            <person name="Quail M.A."/>
            <person name="Rajandream M.A."/>
            <person name="Rutherford K.M."/>
            <person name="Simmonds M."/>
            <person name="Skelton J."/>
            <person name="Whitehead S."/>
            <person name="Spratt B.G."/>
            <person name="Barrell B.G."/>
        </authorList>
    </citation>
    <scope>NUCLEOTIDE SEQUENCE [LARGE SCALE GENOMIC DNA]</scope>
    <source>
        <strain>DSM 15465 / Z2491</strain>
    </source>
</reference>
<name>DAPD_NEIMA</name>
<keyword id="KW-0012">Acyltransferase</keyword>
<keyword id="KW-0028">Amino-acid biosynthesis</keyword>
<keyword id="KW-0963">Cytoplasm</keyword>
<keyword id="KW-0220">Diaminopimelate biosynthesis</keyword>
<keyword id="KW-0457">Lysine biosynthesis</keyword>
<keyword id="KW-0677">Repeat</keyword>
<keyword id="KW-0808">Transferase</keyword>
<protein>
    <recommendedName>
        <fullName evidence="1">2,3,4,5-tetrahydropyridine-2,6-dicarboxylate N-succinyltransferase</fullName>
        <ecNumber evidence="1">2.3.1.117</ecNumber>
    </recommendedName>
    <alternativeName>
        <fullName evidence="1">Tetrahydrodipicolinate N-succinyltransferase</fullName>
        <shortName evidence="1">THDP succinyltransferase</shortName>
        <shortName evidence="1">THP succinyltransferase</shortName>
        <shortName evidence="1">Tetrahydropicolinate succinylase</shortName>
    </alternativeName>
</protein>
<sequence length="273" mass="29426">MSLQNIIETAFENRADITPTTVTPEVKEAVLETIRQLDSGKLRVAERLGVGEWKVNEWAKKAVLLSFRIQDNEVLNDGVNKYFDKVPTKFADWSEDEFKNAGFRAVPGAVARRGSFVAKNVVLMPSYVNIGAYVDEGAMVDTWATVGSCAQIGKNVHLSGGVGIGGVLEPLQASPTIIEDNCFIGARSEIVEGVIVEEGSVISMGVFIGQSTKIFDRTTGEIYQGRVPAGSVVVSGSMPSKDGSHSLYCAVIVKRVDAQTRAKTSVNELLRGI</sequence>